<keyword id="KW-0002">3D-structure</keyword>
<keyword id="KW-0131">Cell cycle</keyword>
<keyword id="KW-0132">Cell division</keyword>
<keyword id="KW-0143">Chaperone</keyword>
<keyword id="KW-0963">Cytoplasm</keyword>
<keyword id="KW-0413">Isomerase</keyword>
<keyword id="KW-1185">Reference proteome</keyword>
<keyword id="KW-0697">Rotamase</keyword>
<protein>
    <recommendedName>
        <fullName>Trigger factor</fullName>
        <shortName>TF</shortName>
        <ecNumber>5.2.1.8</ecNumber>
    </recommendedName>
    <alternativeName>
        <fullName>PPIase</fullName>
    </alternativeName>
</protein>
<dbReference type="EC" id="5.2.1.8"/>
<dbReference type="EMBL" id="AE003852">
    <property type="protein sequence ID" value="AAF95071.1"/>
    <property type="molecule type" value="Genomic_DNA"/>
</dbReference>
<dbReference type="PIR" id="H82139">
    <property type="entry name" value="H82139"/>
</dbReference>
<dbReference type="RefSeq" id="NP_231557.1">
    <property type="nucleotide sequence ID" value="NC_002505.1"/>
</dbReference>
<dbReference type="RefSeq" id="WP_001198446.1">
    <property type="nucleotide sequence ID" value="NZ_LT906614.1"/>
</dbReference>
<dbReference type="PDB" id="1T11">
    <property type="method" value="X-ray"/>
    <property type="resolution" value="2.50 A"/>
    <property type="chains" value="A/B=1-389"/>
</dbReference>
<dbReference type="PDBsum" id="1T11"/>
<dbReference type="SMR" id="Q9KQS5"/>
<dbReference type="STRING" id="243277.VC_1923"/>
<dbReference type="DNASU" id="2613552"/>
<dbReference type="EnsemblBacteria" id="AAF95071">
    <property type="protein sequence ID" value="AAF95071"/>
    <property type="gene ID" value="VC_1923"/>
</dbReference>
<dbReference type="KEGG" id="vch:VC_1923"/>
<dbReference type="PATRIC" id="fig|243277.26.peg.1840"/>
<dbReference type="eggNOG" id="COG0544">
    <property type="taxonomic scope" value="Bacteria"/>
</dbReference>
<dbReference type="HOGENOM" id="CLU_033058_2_0_6"/>
<dbReference type="EvolutionaryTrace" id="Q9KQS5"/>
<dbReference type="Proteomes" id="UP000000584">
    <property type="component" value="Chromosome 1"/>
</dbReference>
<dbReference type="GO" id="GO:0005737">
    <property type="term" value="C:cytoplasm"/>
    <property type="evidence" value="ECO:0007669"/>
    <property type="project" value="UniProtKB-SubCell"/>
</dbReference>
<dbReference type="GO" id="GO:0003755">
    <property type="term" value="F:peptidyl-prolyl cis-trans isomerase activity"/>
    <property type="evidence" value="ECO:0000318"/>
    <property type="project" value="GO_Central"/>
</dbReference>
<dbReference type="GO" id="GO:0044183">
    <property type="term" value="F:protein folding chaperone"/>
    <property type="evidence" value="ECO:0000318"/>
    <property type="project" value="GO_Central"/>
</dbReference>
<dbReference type="GO" id="GO:0043022">
    <property type="term" value="F:ribosome binding"/>
    <property type="evidence" value="ECO:0000318"/>
    <property type="project" value="GO_Central"/>
</dbReference>
<dbReference type="GO" id="GO:0051083">
    <property type="term" value="P:'de novo' cotranslational protein folding"/>
    <property type="evidence" value="ECO:0000318"/>
    <property type="project" value="GO_Central"/>
</dbReference>
<dbReference type="GO" id="GO:0051301">
    <property type="term" value="P:cell division"/>
    <property type="evidence" value="ECO:0007669"/>
    <property type="project" value="UniProtKB-KW"/>
</dbReference>
<dbReference type="GO" id="GO:0061077">
    <property type="term" value="P:chaperone-mediated protein folding"/>
    <property type="evidence" value="ECO:0000318"/>
    <property type="project" value="GO_Central"/>
</dbReference>
<dbReference type="GO" id="GO:0015031">
    <property type="term" value="P:protein transport"/>
    <property type="evidence" value="ECO:0007669"/>
    <property type="project" value="UniProtKB-UniRule"/>
</dbReference>
<dbReference type="GO" id="GO:0043335">
    <property type="term" value="P:protein unfolding"/>
    <property type="evidence" value="ECO:0000318"/>
    <property type="project" value="GO_Central"/>
</dbReference>
<dbReference type="FunFam" id="3.10.50.40:FF:000001">
    <property type="entry name" value="Trigger factor"/>
    <property type="match status" value="1"/>
</dbReference>
<dbReference type="FunFam" id="3.30.70.1050:FF:000001">
    <property type="entry name" value="Trigger factor"/>
    <property type="match status" value="1"/>
</dbReference>
<dbReference type="Gene3D" id="3.10.50.40">
    <property type="match status" value="1"/>
</dbReference>
<dbReference type="Gene3D" id="3.30.70.1050">
    <property type="entry name" value="Trigger factor ribosome-binding domain"/>
    <property type="match status" value="1"/>
</dbReference>
<dbReference type="Gene3D" id="1.10.3120.10">
    <property type="entry name" value="Trigger factor, C-terminal domain"/>
    <property type="match status" value="1"/>
</dbReference>
<dbReference type="HAMAP" id="MF_00303">
    <property type="entry name" value="Trigger_factor_Tig"/>
    <property type="match status" value="1"/>
</dbReference>
<dbReference type="InterPro" id="IPR046357">
    <property type="entry name" value="PPIase_dom_sf"/>
</dbReference>
<dbReference type="InterPro" id="IPR001179">
    <property type="entry name" value="PPIase_FKBP_dom"/>
</dbReference>
<dbReference type="InterPro" id="IPR005215">
    <property type="entry name" value="Trig_fac"/>
</dbReference>
<dbReference type="InterPro" id="IPR008880">
    <property type="entry name" value="Trigger_fac_C"/>
</dbReference>
<dbReference type="InterPro" id="IPR037041">
    <property type="entry name" value="Trigger_fac_C_sf"/>
</dbReference>
<dbReference type="InterPro" id="IPR008881">
    <property type="entry name" value="Trigger_fac_ribosome-bd_bac"/>
</dbReference>
<dbReference type="InterPro" id="IPR036611">
    <property type="entry name" value="Trigger_fac_ribosome-bd_sf"/>
</dbReference>
<dbReference type="InterPro" id="IPR027304">
    <property type="entry name" value="Trigger_fact/SurA_dom_sf"/>
</dbReference>
<dbReference type="NCBIfam" id="TIGR00115">
    <property type="entry name" value="tig"/>
    <property type="match status" value="1"/>
</dbReference>
<dbReference type="PANTHER" id="PTHR30560">
    <property type="entry name" value="TRIGGER FACTOR CHAPERONE AND PEPTIDYL-PROLYL CIS/TRANS ISOMERASE"/>
    <property type="match status" value="1"/>
</dbReference>
<dbReference type="PANTHER" id="PTHR30560:SF3">
    <property type="entry name" value="TRIGGER FACTOR-LIKE PROTEIN TIG, CHLOROPLASTIC"/>
    <property type="match status" value="1"/>
</dbReference>
<dbReference type="Pfam" id="PF00254">
    <property type="entry name" value="FKBP_C"/>
    <property type="match status" value="1"/>
</dbReference>
<dbReference type="Pfam" id="PF05698">
    <property type="entry name" value="Trigger_C"/>
    <property type="match status" value="1"/>
</dbReference>
<dbReference type="Pfam" id="PF05697">
    <property type="entry name" value="Trigger_N"/>
    <property type="match status" value="1"/>
</dbReference>
<dbReference type="PIRSF" id="PIRSF003095">
    <property type="entry name" value="Trigger_factor"/>
    <property type="match status" value="1"/>
</dbReference>
<dbReference type="SUPFAM" id="SSF54534">
    <property type="entry name" value="FKBP-like"/>
    <property type="match status" value="1"/>
</dbReference>
<dbReference type="SUPFAM" id="SSF109998">
    <property type="entry name" value="Triger factor/SurA peptide-binding domain-like"/>
    <property type="match status" value="1"/>
</dbReference>
<dbReference type="SUPFAM" id="SSF102735">
    <property type="entry name" value="Trigger factor ribosome-binding domain"/>
    <property type="match status" value="1"/>
</dbReference>
<dbReference type="PROSITE" id="PS50059">
    <property type="entry name" value="FKBP_PPIASE"/>
    <property type="match status" value="1"/>
</dbReference>
<accession>Q9KQS5</accession>
<evidence type="ECO:0000250" key="1"/>
<evidence type="ECO:0000305" key="2"/>
<evidence type="ECO:0007829" key="3">
    <source>
        <dbReference type="PDB" id="1T11"/>
    </source>
</evidence>
<organism>
    <name type="scientific">Vibrio cholerae serotype O1 (strain ATCC 39315 / El Tor Inaba N16961)</name>
    <dbReference type="NCBI Taxonomy" id="243277"/>
    <lineage>
        <taxon>Bacteria</taxon>
        <taxon>Pseudomonadati</taxon>
        <taxon>Pseudomonadota</taxon>
        <taxon>Gammaproteobacteria</taxon>
        <taxon>Vibrionales</taxon>
        <taxon>Vibrionaceae</taxon>
        <taxon>Vibrio</taxon>
    </lineage>
</organism>
<proteinExistence type="evidence at protein level"/>
<name>TIG_VIBCH</name>
<reference key="1">
    <citation type="journal article" date="2000" name="Nature">
        <title>DNA sequence of both chromosomes of the cholera pathogen Vibrio cholerae.</title>
        <authorList>
            <person name="Heidelberg J.F."/>
            <person name="Eisen J.A."/>
            <person name="Nelson W.C."/>
            <person name="Clayton R.A."/>
            <person name="Gwinn M.L."/>
            <person name="Dodson R.J."/>
            <person name="Haft D.H."/>
            <person name="Hickey E.K."/>
            <person name="Peterson J.D."/>
            <person name="Umayam L.A."/>
            <person name="Gill S.R."/>
            <person name="Nelson K.E."/>
            <person name="Read T.D."/>
            <person name="Tettelin H."/>
            <person name="Richardson D.L."/>
            <person name="Ermolaeva M.D."/>
            <person name="Vamathevan J.J."/>
            <person name="Bass S."/>
            <person name="Qin H."/>
            <person name="Dragoi I."/>
            <person name="Sellers P."/>
            <person name="McDonald L.A."/>
            <person name="Utterback T.R."/>
            <person name="Fleischmann R.D."/>
            <person name="Nierman W.C."/>
            <person name="White O."/>
            <person name="Salzberg S.L."/>
            <person name="Smith H.O."/>
            <person name="Colwell R.R."/>
            <person name="Mekalanos J.J."/>
            <person name="Venter J.C."/>
            <person name="Fraser C.M."/>
        </authorList>
    </citation>
    <scope>NUCLEOTIDE SEQUENCE [LARGE SCALE GENOMIC DNA]</scope>
    <source>
        <strain>ATCC 39315 / El Tor Inaba N16961</strain>
    </source>
</reference>
<feature type="chain" id="PRO_0000179457" description="Trigger factor">
    <location>
        <begin position="1"/>
        <end position="433"/>
    </location>
</feature>
<feature type="domain" description="PPIase FKBP-type">
    <location>
        <begin position="161"/>
        <end position="246"/>
    </location>
</feature>
<feature type="strand" evidence="3">
    <location>
        <begin position="2"/>
        <end position="7"/>
    </location>
</feature>
<feature type="strand" evidence="3">
    <location>
        <begin position="12"/>
        <end position="19"/>
    </location>
</feature>
<feature type="helix" evidence="3">
    <location>
        <begin position="21"/>
        <end position="36"/>
    </location>
</feature>
<feature type="helix" evidence="3">
    <location>
        <begin position="51"/>
        <end position="81"/>
    </location>
</feature>
<feature type="strand" evidence="3">
    <location>
        <begin position="86"/>
        <end position="88"/>
    </location>
</feature>
<feature type="strand" evidence="3">
    <location>
        <begin position="91"/>
        <end position="96"/>
    </location>
</feature>
<feature type="strand" evidence="3">
    <location>
        <begin position="103"/>
        <end position="111"/>
    </location>
</feature>
<feature type="strand" evidence="3">
    <location>
        <begin position="124"/>
        <end position="128"/>
    </location>
</feature>
<feature type="helix" evidence="3">
    <location>
        <begin position="136"/>
        <end position="148"/>
    </location>
</feature>
<feature type="strand" evidence="3">
    <location>
        <begin position="150"/>
        <end position="153"/>
    </location>
</feature>
<feature type="strand" evidence="3">
    <location>
        <begin position="163"/>
        <end position="175"/>
    </location>
</feature>
<feature type="strand" evidence="3">
    <location>
        <begin position="181"/>
        <end position="188"/>
    </location>
</feature>
<feature type="helix" evidence="3">
    <location>
        <begin position="199"/>
        <end position="201"/>
    </location>
</feature>
<feature type="turn" evidence="3">
    <location>
        <begin position="202"/>
        <end position="204"/>
    </location>
</feature>
<feature type="strand" evidence="3">
    <location>
        <begin position="213"/>
        <end position="216"/>
    </location>
</feature>
<feature type="turn" evidence="3">
    <location>
        <begin position="224"/>
        <end position="226"/>
    </location>
</feature>
<feature type="strand" evidence="3">
    <location>
        <begin position="230"/>
        <end position="233"/>
    </location>
</feature>
<feature type="strand" evidence="3">
    <location>
        <begin position="237"/>
        <end position="244"/>
    </location>
</feature>
<feature type="helix" evidence="3">
    <location>
        <begin position="251"/>
        <end position="256"/>
    </location>
</feature>
<feature type="turn" evidence="3">
    <location>
        <begin position="258"/>
        <end position="261"/>
    </location>
</feature>
<feature type="helix" evidence="3">
    <location>
        <begin position="262"/>
        <end position="287"/>
    </location>
</feature>
<feature type="turn" evidence="3">
    <location>
        <begin position="288"/>
        <end position="290"/>
    </location>
</feature>
<feature type="strand" evidence="3">
    <location>
        <begin position="300"/>
        <end position="302"/>
    </location>
</feature>
<feature type="helix" evidence="3">
    <location>
        <begin position="304"/>
        <end position="321"/>
    </location>
</feature>
<feature type="helix" evidence="3">
    <location>
        <begin position="326"/>
        <end position="329"/>
    </location>
</feature>
<feature type="helix" evidence="3">
    <location>
        <begin position="334"/>
        <end position="336"/>
    </location>
</feature>
<feature type="helix" evidence="3">
    <location>
        <begin position="338"/>
        <end position="357"/>
    </location>
</feature>
<feature type="helix" evidence="3">
    <location>
        <begin position="364"/>
        <end position="376"/>
    </location>
</feature>
<gene>
    <name type="primary">tig</name>
    <name type="ordered locus">VC_1923</name>
</gene>
<comment type="function">
    <text evidence="1">Involved in protein export. Acts as a chaperone by maintaining the newly synthesized protein in an open conformation. Functions as a peptidyl-prolyl cis-trans isomerase (By similarity).</text>
</comment>
<comment type="catalytic activity">
    <reaction>
        <text>[protein]-peptidylproline (omega=180) = [protein]-peptidylproline (omega=0)</text>
        <dbReference type="Rhea" id="RHEA:16237"/>
        <dbReference type="Rhea" id="RHEA-COMP:10747"/>
        <dbReference type="Rhea" id="RHEA-COMP:10748"/>
        <dbReference type="ChEBI" id="CHEBI:83833"/>
        <dbReference type="ChEBI" id="CHEBI:83834"/>
        <dbReference type="EC" id="5.2.1.8"/>
    </reaction>
</comment>
<comment type="subcellular location">
    <subcellularLocation>
        <location>Cytoplasm</location>
    </subcellularLocation>
    <text evidence="1">About half TF is bound to the ribosome near the polypeptide exit tunnel while the other half is free in the cytoplasm.</text>
</comment>
<comment type="domain">
    <text evidence="1">Consists of 3 domains; the N-terminus binds the ribosome, the middle domain has PPIase activity, while the C-terminus has intrinsic chaperone activity on its own.</text>
</comment>
<comment type="similarity">
    <text evidence="2">Belongs to the FKBP-type PPIase family. Tig subfamily.</text>
</comment>
<sequence>MQVTVETLEGLQRRLNITVPAANIEDAVAAELRNIAKNRRFDGFRKGKVPMKMVAKMYGKAVRQDVLGEVMQRHFIEAIVKEKINPAGAPTFAPVEIGEGKDLVFTATFEVYPEVELKGLENIAVEKPAAEVTDADVAEMLETLRKQQATWKEVDEAAENGKRVSIDFVGSIDGVEFEGGKAENFPLEMGAGRMIPGFEDGIVGKTKGMEFVIDVTFPEDYHAENLKGKAAKFAIKVNKVEARELPELNDEFVARFGVAEGGVDALKAEVRKNMERELKQAIKARIKEQAIEGLVKENEIQVPSALIDQEINVLRQQAAQRFGGNVEAAAQLPRELFEEQAKRRVVVGLLLGEVIRTHELKADEEKVKALITEMATAYEDPSEVVSYYEQNQQLMNNMRNVALEEQAVDAIIAKAKVTEKAISFSELMNPVAA</sequence>